<dbReference type="EC" id="3.4.21.75" evidence="9"/>
<dbReference type="EMBL" id="X54056">
    <property type="protein sequence ID" value="CAA37988.1"/>
    <property type="molecule type" value="mRNA"/>
</dbReference>
<dbReference type="EMBL" id="L26489">
    <property type="protein sequence ID" value="AAA37643.1"/>
    <property type="molecule type" value="mRNA"/>
</dbReference>
<dbReference type="EMBL" id="CH466543">
    <property type="protein sequence ID" value="EDL06988.1"/>
    <property type="molecule type" value="Genomic_DNA"/>
</dbReference>
<dbReference type="EMBL" id="BC048234">
    <property type="protein sequence ID" value="AAH48234.1"/>
    <property type="molecule type" value="mRNA"/>
</dbReference>
<dbReference type="CCDS" id="CCDS21397.1"/>
<dbReference type="PIR" id="A23679">
    <property type="entry name" value="KXMSF"/>
</dbReference>
<dbReference type="RefSeq" id="NP_001074923.1">
    <property type="nucleotide sequence ID" value="NM_001081454.2"/>
</dbReference>
<dbReference type="RefSeq" id="NP_035176.1">
    <property type="nucleotide sequence ID" value="NM_011046.3"/>
</dbReference>
<dbReference type="RefSeq" id="XP_030098069.1">
    <property type="nucleotide sequence ID" value="XM_030242209.2"/>
</dbReference>
<dbReference type="RefSeq" id="XP_030098070.1">
    <property type="nucleotide sequence ID" value="XM_030242210.2"/>
</dbReference>
<dbReference type="PDB" id="1P8J">
    <property type="method" value="X-ray"/>
    <property type="resolution" value="2.60 A"/>
    <property type="chains" value="A/B/C/D/E/F/G/H=108-578"/>
</dbReference>
<dbReference type="PDBsum" id="1P8J"/>
<dbReference type="SMR" id="P23188"/>
<dbReference type="BioGRID" id="202059">
    <property type="interactions" value="4"/>
</dbReference>
<dbReference type="ELM" id="P23188"/>
<dbReference type="FunCoup" id="P23188">
    <property type="interactions" value="197"/>
</dbReference>
<dbReference type="STRING" id="10090.ENSMUSP00000113793"/>
<dbReference type="MEROPS" id="S08.071"/>
<dbReference type="GlyCosmos" id="P23188">
    <property type="glycosylation" value="2 sites, No reported glycans"/>
</dbReference>
<dbReference type="GlyGen" id="P23188">
    <property type="glycosylation" value="3 sites"/>
</dbReference>
<dbReference type="iPTMnet" id="P23188"/>
<dbReference type="PhosphoSitePlus" id="P23188"/>
<dbReference type="SwissPalm" id="P23188"/>
<dbReference type="PaxDb" id="10090-ENSMUSP00000113370"/>
<dbReference type="PeptideAtlas" id="P23188"/>
<dbReference type="ProteomicsDB" id="271646"/>
<dbReference type="Pumba" id="P23188"/>
<dbReference type="Antibodypedia" id="4013">
    <property type="antibodies" value="459 antibodies from 39 providers"/>
</dbReference>
<dbReference type="DNASU" id="18550"/>
<dbReference type="Ensembl" id="ENSMUST00000107362.10">
    <property type="protein sequence ID" value="ENSMUSP00000102985.4"/>
    <property type="gene ID" value="ENSMUSG00000030530.16"/>
</dbReference>
<dbReference type="Ensembl" id="ENSMUST00000120753.3">
    <property type="protein sequence ID" value="ENSMUSP00000113793.2"/>
    <property type="gene ID" value="ENSMUSG00000030530.16"/>
</dbReference>
<dbReference type="Ensembl" id="ENSMUST00000122232.8">
    <property type="protein sequence ID" value="ENSMUSP00000113370.2"/>
    <property type="gene ID" value="ENSMUSG00000030530.16"/>
</dbReference>
<dbReference type="GeneID" id="18550"/>
<dbReference type="KEGG" id="mmu:18550"/>
<dbReference type="UCSC" id="uc009iau.1">
    <property type="organism name" value="mouse"/>
</dbReference>
<dbReference type="AGR" id="MGI:97513"/>
<dbReference type="CTD" id="5045"/>
<dbReference type="MGI" id="MGI:97513">
    <property type="gene designation" value="Furin"/>
</dbReference>
<dbReference type="VEuPathDB" id="HostDB:ENSMUSG00000030530"/>
<dbReference type="eggNOG" id="KOG3525">
    <property type="taxonomic scope" value="Eukaryota"/>
</dbReference>
<dbReference type="GeneTree" id="ENSGT00940000157220"/>
<dbReference type="HOGENOM" id="CLU_002976_4_0_1"/>
<dbReference type="InParanoid" id="P23188"/>
<dbReference type="OMA" id="IYLVSPM"/>
<dbReference type="OrthoDB" id="300641at2759"/>
<dbReference type="PhylomeDB" id="P23188"/>
<dbReference type="TreeFam" id="TF314277"/>
<dbReference type="BRENDA" id="3.4.21.75">
    <property type="organism ID" value="3474"/>
</dbReference>
<dbReference type="Reactome" id="R-MMU-1442490">
    <property type="pathway name" value="Collagen degradation"/>
</dbReference>
<dbReference type="Reactome" id="R-MMU-1566948">
    <property type="pathway name" value="Elastic fibre formation"/>
</dbReference>
<dbReference type="Reactome" id="R-MMU-1592389">
    <property type="pathway name" value="Activation of Matrix Metalloproteinases"/>
</dbReference>
<dbReference type="Reactome" id="R-MMU-159782">
    <property type="pathway name" value="Removal of aminoterminal propeptides from gamma-carboxylated proteins"/>
</dbReference>
<dbReference type="Reactome" id="R-MMU-167060">
    <property type="pathway name" value="NGF processing"/>
</dbReference>
<dbReference type="Reactome" id="R-MMU-186797">
    <property type="pathway name" value="Signaling by PDGF"/>
</dbReference>
<dbReference type="Reactome" id="R-MMU-1912420">
    <property type="pathway name" value="Pre-NOTCH Processing in Golgi"/>
</dbReference>
<dbReference type="Reactome" id="R-MMU-2173789">
    <property type="pathway name" value="TGF-beta receptor signaling activates SMADs"/>
</dbReference>
<dbReference type="Reactome" id="R-MMU-2173796">
    <property type="pathway name" value="SMAD2/SMAD3:SMAD4 heterotrimer regulates transcription"/>
</dbReference>
<dbReference type="Reactome" id="R-MMU-8963889">
    <property type="pathway name" value="Assembly of active LPL and LIPC lipase complexes"/>
</dbReference>
<dbReference type="BioGRID-ORCS" id="18550">
    <property type="hits" value="10 hits in 83 CRISPR screens"/>
</dbReference>
<dbReference type="ChiTaRS" id="Furin">
    <property type="organism name" value="mouse"/>
</dbReference>
<dbReference type="EvolutionaryTrace" id="P23188"/>
<dbReference type="PRO" id="PR:P23188"/>
<dbReference type="Proteomes" id="UP000000589">
    <property type="component" value="Chromosome 7"/>
</dbReference>
<dbReference type="RNAct" id="P23188">
    <property type="molecule type" value="protein"/>
</dbReference>
<dbReference type="Bgee" id="ENSMUSG00000030530">
    <property type="expression patterns" value="Expressed in epithelium of stomach and 230 other cell types or tissues"/>
</dbReference>
<dbReference type="ExpressionAtlas" id="P23188">
    <property type="expression patterns" value="baseline and differential"/>
</dbReference>
<dbReference type="GO" id="GO:0009986">
    <property type="term" value="C:cell surface"/>
    <property type="evidence" value="ECO:0007669"/>
    <property type="project" value="Ensembl"/>
</dbReference>
<dbReference type="GO" id="GO:0005769">
    <property type="term" value="C:early endosome"/>
    <property type="evidence" value="ECO:0000304"/>
    <property type="project" value="MGI"/>
</dbReference>
<dbReference type="GO" id="GO:0005788">
    <property type="term" value="C:endoplasmic reticulum lumen"/>
    <property type="evidence" value="ECO:0000304"/>
    <property type="project" value="Reactome"/>
</dbReference>
<dbReference type="GO" id="GO:0010008">
    <property type="term" value="C:endosome membrane"/>
    <property type="evidence" value="ECO:0007669"/>
    <property type="project" value="UniProtKB-SubCell"/>
</dbReference>
<dbReference type="GO" id="GO:0005576">
    <property type="term" value="C:extracellular region"/>
    <property type="evidence" value="ECO:0000304"/>
    <property type="project" value="Reactome"/>
</dbReference>
<dbReference type="GO" id="GO:0005796">
    <property type="term" value="C:Golgi lumen"/>
    <property type="evidence" value="ECO:0000314"/>
    <property type="project" value="MGI"/>
</dbReference>
<dbReference type="GO" id="GO:0000139">
    <property type="term" value="C:Golgi membrane"/>
    <property type="evidence" value="ECO:0007669"/>
    <property type="project" value="Ensembl"/>
</dbReference>
<dbReference type="GO" id="GO:0016020">
    <property type="term" value="C:membrane"/>
    <property type="evidence" value="ECO:0000304"/>
    <property type="project" value="MGI"/>
</dbReference>
<dbReference type="GO" id="GO:0045121">
    <property type="term" value="C:membrane raft"/>
    <property type="evidence" value="ECO:0007669"/>
    <property type="project" value="Ensembl"/>
</dbReference>
<dbReference type="GO" id="GO:0005886">
    <property type="term" value="C:plasma membrane"/>
    <property type="evidence" value="ECO:0007669"/>
    <property type="project" value="UniProtKB-SubCell"/>
</dbReference>
<dbReference type="GO" id="GO:0005802">
    <property type="term" value="C:trans-Golgi network"/>
    <property type="evidence" value="ECO:0000314"/>
    <property type="project" value="MGI"/>
</dbReference>
<dbReference type="GO" id="GO:0030140">
    <property type="term" value="C:trans-Golgi network transport vesicle"/>
    <property type="evidence" value="ECO:0000266"/>
    <property type="project" value="MGI"/>
</dbReference>
<dbReference type="GO" id="GO:0012510">
    <property type="term" value="C:trans-Golgi network transport vesicle membrane"/>
    <property type="evidence" value="ECO:0000304"/>
    <property type="project" value="MGI"/>
</dbReference>
<dbReference type="GO" id="GO:0061133">
    <property type="term" value="F:endopeptidase activator activity"/>
    <property type="evidence" value="ECO:0007669"/>
    <property type="project" value="Ensembl"/>
</dbReference>
<dbReference type="GO" id="GO:1904399">
    <property type="term" value="F:heparan sulfate binding"/>
    <property type="evidence" value="ECO:0000250"/>
    <property type="project" value="UniProtKB"/>
</dbReference>
<dbReference type="GO" id="GO:0008201">
    <property type="term" value="F:heparin binding"/>
    <property type="evidence" value="ECO:0000250"/>
    <property type="project" value="UniProtKB"/>
</dbReference>
<dbReference type="GO" id="GO:0046872">
    <property type="term" value="F:metal ion binding"/>
    <property type="evidence" value="ECO:0007669"/>
    <property type="project" value="UniProtKB-KW"/>
</dbReference>
<dbReference type="GO" id="GO:0048406">
    <property type="term" value="F:nerve growth factor binding"/>
    <property type="evidence" value="ECO:0007669"/>
    <property type="project" value="Ensembl"/>
</dbReference>
<dbReference type="GO" id="GO:0008233">
    <property type="term" value="F:peptidase activity"/>
    <property type="evidence" value="ECO:0000266"/>
    <property type="project" value="MGI"/>
</dbReference>
<dbReference type="GO" id="GO:0042277">
    <property type="term" value="F:peptide binding"/>
    <property type="evidence" value="ECO:0007669"/>
    <property type="project" value="Ensembl"/>
</dbReference>
<dbReference type="GO" id="GO:0002020">
    <property type="term" value="F:protease binding"/>
    <property type="evidence" value="ECO:0007669"/>
    <property type="project" value="Ensembl"/>
</dbReference>
<dbReference type="GO" id="GO:0004252">
    <property type="term" value="F:serine-type endopeptidase activity"/>
    <property type="evidence" value="ECO:0000314"/>
    <property type="project" value="MGI"/>
</dbReference>
<dbReference type="GO" id="GO:0004867">
    <property type="term" value="F:serine-type endopeptidase inhibitor activity"/>
    <property type="evidence" value="ECO:0007669"/>
    <property type="project" value="Ensembl"/>
</dbReference>
<dbReference type="GO" id="GO:0001825">
    <property type="term" value="P:blastocyst formation"/>
    <property type="evidence" value="ECO:0000316"/>
    <property type="project" value="CACAO"/>
</dbReference>
<dbReference type="GO" id="GO:0140447">
    <property type="term" value="P:cytokine precursor processing"/>
    <property type="evidence" value="ECO:0000250"/>
    <property type="project" value="UniProtKB"/>
</dbReference>
<dbReference type="GO" id="GO:0090472">
    <property type="term" value="P:dibasic protein processing"/>
    <property type="evidence" value="ECO:0007669"/>
    <property type="project" value="Ensembl"/>
</dbReference>
<dbReference type="GO" id="GO:0032804">
    <property type="term" value="P:negative regulation of low-density lipoprotein particle receptor catabolic process"/>
    <property type="evidence" value="ECO:0007669"/>
    <property type="project" value="Ensembl"/>
</dbReference>
<dbReference type="GO" id="GO:0032911">
    <property type="term" value="P:negative regulation of transforming growth factor beta1 production"/>
    <property type="evidence" value="ECO:0007669"/>
    <property type="project" value="Ensembl"/>
</dbReference>
<dbReference type="GO" id="GO:0032902">
    <property type="term" value="P:nerve growth factor production"/>
    <property type="evidence" value="ECO:0007669"/>
    <property type="project" value="Ensembl"/>
</dbReference>
<dbReference type="GO" id="GO:0043043">
    <property type="term" value="P:peptide biosynthetic process"/>
    <property type="evidence" value="ECO:0007669"/>
    <property type="project" value="Ensembl"/>
</dbReference>
<dbReference type="GO" id="GO:0016486">
    <property type="term" value="P:peptide hormone processing"/>
    <property type="evidence" value="ECO:0007669"/>
    <property type="project" value="Ensembl"/>
</dbReference>
<dbReference type="GO" id="GO:0046598">
    <property type="term" value="P:positive regulation of viral entry into host cell"/>
    <property type="evidence" value="ECO:0007669"/>
    <property type="project" value="Ensembl"/>
</dbReference>
<dbReference type="GO" id="GO:0051604">
    <property type="term" value="P:protein maturation"/>
    <property type="evidence" value="ECO:0000314"/>
    <property type="project" value="MGI"/>
</dbReference>
<dbReference type="GO" id="GO:0016485">
    <property type="term" value="P:protein processing"/>
    <property type="evidence" value="ECO:0000314"/>
    <property type="project" value="MGI"/>
</dbReference>
<dbReference type="GO" id="GO:0032374">
    <property type="term" value="P:regulation of cholesterol transport"/>
    <property type="evidence" value="ECO:0000315"/>
    <property type="project" value="MGI"/>
</dbReference>
<dbReference type="GO" id="GO:0009966">
    <property type="term" value="P:regulation of signal transduction"/>
    <property type="evidence" value="ECO:0000314"/>
    <property type="project" value="MGI"/>
</dbReference>
<dbReference type="GO" id="GO:0032940">
    <property type="term" value="P:secretion by cell"/>
    <property type="evidence" value="ECO:0007669"/>
    <property type="project" value="Ensembl"/>
</dbReference>
<dbReference type="GO" id="GO:0006465">
    <property type="term" value="P:signal peptide processing"/>
    <property type="evidence" value="ECO:0000314"/>
    <property type="project" value="MGI"/>
</dbReference>
<dbReference type="GO" id="GO:0019058">
    <property type="term" value="P:viral life cycle"/>
    <property type="evidence" value="ECO:0007669"/>
    <property type="project" value="Ensembl"/>
</dbReference>
<dbReference type="GO" id="GO:0031638">
    <property type="term" value="P:zymogen activation"/>
    <property type="evidence" value="ECO:0007669"/>
    <property type="project" value="Ensembl"/>
</dbReference>
<dbReference type="CDD" id="cd00064">
    <property type="entry name" value="FU"/>
    <property type="match status" value="2"/>
</dbReference>
<dbReference type="CDD" id="cd04059">
    <property type="entry name" value="Peptidases_S8_Protein_convertases_Kexins_Furin-like"/>
    <property type="match status" value="1"/>
</dbReference>
<dbReference type="FunFam" id="3.40.50.200:FF:000001">
    <property type="entry name" value="Furin 2, isoform B"/>
    <property type="match status" value="1"/>
</dbReference>
<dbReference type="FunFam" id="2.60.120.260:FF:000034">
    <property type="entry name" value="furin isoform X2"/>
    <property type="match status" value="1"/>
</dbReference>
<dbReference type="FunFam" id="2.10.220.10:FF:000023">
    <property type="entry name" value="Furin, paired basic amino acid cleaving enzyme"/>
    <property type="match status" value="1"/>
</dbReference>
<dbReference type="FunFam" id="3.30.70.850:FF:000001">
    <property type="entry name" value="Proprotein convertase subtilisin/kexin type 5"/>
    <property type="match status" value="1"/>
</dbReference>
<dbReference type="Gene3D" id="2.60.120.260">
    <property type="entry name" value="Galactose-binding domain-like"/>
    <property type="match status" value="1"/>
</dbReference>
<dbReference type="Gene3D" id="2.10.220.10">
    <property type="entry name" value="Hormone Receptor, Insulin-like Growth Factor Receptor 1, Chain A, domain 2"/>
    <property type="match status" value="1"/>
</dbReference>
<dbReference type="Gene3D" id="3.30.70.850">
    <property type="entry name" value="Peptidase S8, pro-domain"/>
    <property type="match status" value="1"/>
</dbReference>
<dbReference type="Gene3D" id="3.40.50.200">
    <property type="entry name" value="Peptidase S8/S53 domain"/>
    <property type="match status" value="1"/>
</dbReference>
<dbReference type="InterPro" id="IPR006212">
    <property type="entry name" value="Furin_repeat"/>
</dbReference>
<dbReference type="InterPro" id="IPR008979">
    <property type="entry name" value="Galactose-bd-like_sf"/>
</dbReference>
<dbReference type="InterPro" id="IPR009030">
    <property type="entry name" value="Growth_fac_rcpt_cys_sf"/>
</dbReference>
<dbReference type="InterPro" id="IPR034182">
    <property type="entry name" value="Kexin/furin"/>
</dbReference>
<dbReference type="InterPro" id="IPR002884">
    <property type="entry name" value="P_dom"/>
</dbReference>
<dbReference type="InterPro" id="IPR000209">
    <property type="entry name" value="Peptidase_S8/S53_dom"/>
</dbReference>
<dbReference type="InterPro" id="IPR036852">
    <property type="entry name" value="Peptidase_S8/S53_dom_sf"/>
</dbReference>
<dbReference type="InterPro" id="IPR023827">
    <property type="entry name" value="Peptidase_S8_Asp-AS"/>
</dbReference>
<dbReference type="InterPro" id="IPR022398">
    <property type="entry name" value="Peptidase_S8_His-AS"/>
</dbReference>
<dbReference type="InterPro" id="IPR023828">
    <property type="entry name" value="Peptidase_S8_Ser-AS"/>
</dbReference>
<dbReference type="InterPro" id="IPR015500">
    <property type="entry name" value="Peptidase_S8_subtilisin-rel"/>
</dbReference>
<dbReference type="InterPro" id="IPR032815">
    <property type="entry name" value="S8_pro-domain"/>
</dbReference>
<dbReference type="InterPro" id="IPR038466">
    <property type="entry name" value="S8_pro-domain_sf"/>
</dbReference>
<dbReference type="PANTHER" id="PTHR42884:SF1">
    <property type="entry name" value="FURIN"/>
    <property type="match status" value="1"/>
</dbReference>
<dbReference type="PANTHER" id="PTHR42884">
    <property type="entry name" value="PROPROTEIN CONVERTASE SUBTILISIN/KEXIN-RELATED"/>
    <property type="match status" value="1"/>
</dbReference>
<dbReference type="Pfam" id="PF01483">
    <property type="entry name" value="P_proprotein"/>
    <property type="match status" value="1"/>
</dbReference>
<dbReference type="Pfam" id="PF00082">
    <property type="entry name" value="Peptidase_S8"/>
    <property type="match status" value="1"/>
</dbReference>
<dbReference type="Pfam" id="PF16470">
    <property type="entry name" value="S8_pro-domain"/>
    <property type="match status" value="1"/>
</dbReference>
<dbReference type="PRINTS" id="PR00723">
    <property type="entry name" value="SUBTILISIN"/>
</dbReference>
<dbReference type="SMART" id="SM00261">
    <property type="entry name" value="FU"/>
    <property type="match status" value="2"/>
</dbReference>
<dbReference type="SUPFAM" id="SSF49785">
    <property type="entry name" value="Galactose-binding domain-like"/>
    <property type="match status" value="1"/>
</dbReference>
<dbReference type="SUPFAM" id="SSF57184">
    <property type="entry name" value="Growth factor receptor domain"/>
    <property type="match status" value="1"/>
</dbReference>
<dbReference type="SUPFAM" id="SSF54897">
    <property type="entry name" value="Protease propeptides/inhibitors"/>
    <property type="match status" value="1"/>
</dbReference>
<dbReference type="SUPFAM" id="SSF52743">
    <property type="entry name" value="Subtilisin-like"/>
    <property type="match status" value="1"/>
</dbReference>
<dbReference type="PROSITE" id="PS51829">
    <property type="entry name" value="P_HOMO_B"/>
    <property type="match status" value="1"/>
</dbReference>
<dbReference type="PROSITE" id="PS51892">
    <property type="entry name" value="SUBTILASE"/>
    <property type="match status" value="1"/>
</dbReference>
<dbReference type="PROSITE" id="PS00136">
    <property type="entry name" value="SUBTILASE_ASP"/>
    <property type="match status" value="1"/>
</dbReference>
<dbReference type="PROSITE" id="PS00137">
    <property type="entry name" value="SUBTILASE_HIS"/>
    <property type="match status" value="1"/>
</dbReference>
<dbReference type="PROSITE" id="PS00138">
    <property type="entry name" value="SUBTILASE_SER"/>
    <property type="match status" value="1"/>
</dbReference>
<feature type="signal peptide" evidence="3">
    <location>
        <begin position="1"/>
        <end position="24"/>
    </location>
</feature>
<feature type="propeptide" id="PRO_0000027030" description="Inhibition peptide" evidence="1">
    <location>
        <begin position="25"/>
        <end position="107"/>
    </location>
</feature>
<feature type="chain" id="PRO_0000027031" description="Furin">
    <location>
        <begin position="108"/>
        <end position="793"/>
    </location>
</feature>
<feature type="topological domain" description="Lumenal" evidence="12">
    <location>
        <begin position="108"/>
        <end position="714"/>
    </location>
</feature>
<feature type="transmembrane region" description="Helical" evidence="3">
    <location>
        <begin position="715"/>
        <end position="735"/>
    </location>
</feature>
<feature type="topological domain" description="Cytoplasmic" evidence="12">
    <location>
        <begin position="736"/>
        <end position="793"/>
    </location>
</feature>
<feature type="domain" description="Peptidase S8" evidence="6">
    <location>
        <begin position="121"/>
        <end position="435"/>
    </location>
</feature>
<feature type="domain" description="P/Homo B" evidence="5">
    <location>
        <begin position="444"/>
        <end position="576"/>
    </location>
</feature>
<feature type="repeat" description="FU 1" evidence="3">
    <location>
        <begin position="577"/>
        <end position="620"/>
    </location>
</feature>
<feature type="repeat" description="FU 2" evidence="3">
    <location>
        <begin position="638"/>
        <end position="681"/>
    </location>
</feature>
<feature type="region of interest" description="Disordered" evidence="7">
    <location>
        <begin position="160"/>
        <end position="182"/>
    </location>
</feature>
<feature type="region of interest" description="Disordered" evidence="7">
    <location>
        <begin position="673"/>
        <end position="697"/>
    </location>
</feature>
<feature type="region of interest" description="Cell surface signal" evidence="1">
    <location>
        <begin position="758"/>
        <end position="761"/>
    </location>
</feature>
<feature type="region of interest" description="Disordered" evidence="7">
    <location>
        <begin position="766"/>
        <end position="793"/>
    </location>
</feature>
<feature type="short sequence motif" description="Cell attachment site" evidence="4">
    <location>
        <begin position="498"/>
        <end position="500"/>
    </location>
</feature>
<feature type="short sequence motif" description="Trans Golgi network signal" evidence="1">
    <location>
        <begin position="772"/>
        <end position="778"/>
    </location>
</feature>
<feature type="compositionally biased region" description="Low complexity" evidence="7">
    <location>
        <begin position="676"/>
        <end position="688"/>
    </location>
</feature>
<feature type="compositionally biased region" description="Acidic residues" evidence="7">
    <location>
        <begin position="766"/>
        <end position="779"/>
    </location>
</feature>
<feature type="active site" description="Charge relay system" evidence="6">
    <location>
        <position position="153"/>
    </location>
</feature>
<feature type="active site" description="Charge relay system" evidence="6">
    <location>
        <position position="194"/>
    </location>
</feature>
<feature type="active site" description="Charge relay system" evidence="6">
    <location>
        <position position="368"/>
    </location>
</feature>
<feature type="binding site" evidence="8 14">
    <location>
        <position position="115"/>
    </location>
    <ligand>
        <name>Ca(2+)</name>
        <dbReference type="ChEBI" id="CHEBI:29108"/>
        <label>1</label>
    </ligand>
</feature>
<feature type="binding site" evidence="13 14">
    <location>
        <position position="154"/>
    </location>
    <ligand>
        <name>substrate</name>
    </ligand>
</feature>
<feature type="binding site" evidence="8 14">
    <location>
        <position position="162"/>
    </location>
    <ligand>
        <name>Ca(2+)</name>
        <dbReference type="ChEBI" id="CHEBI:29108"/>
        <label>1</label>
    </ligand>
</feature>
<feature type="binding site" evidence="1">
    <location>
        <position position="174"/>
    </location>
    <ligand>
        <name>Ca(2+)</name>
        <dbReference type="ChEBI" id="CHEBI:29108"/>
        <label>2</label>
    </ligand>
</feature>
<feature type="binding site" evidence="1">
    <location>
        <position position="179"/>
    </location>
    <ligand>
        <name>Ca(2+)</name>
        <dbReference type="ChEBI" id="CHEBI:29108"/>
        <label>2</label>
    </ligand>
</feature>
<feature type="binding site" evidence="1">
    <location>
        <position position="181"/>
    </location>
    <ligand>
        <name>Ca(2+)</name>
        <dbReference type="ChEBI" id="CHEBI:29108"/>
        <label>2</label>
    </ligand>
</feature>
<feature type="binding site" evidence="13 14">
    <location>
        <begin position="191"/>
        <end position="192"/>
    </location>
    <ligand>
        <name>substrate</name>
    </ligand>
</feature>
<feature type="binding site" evidence="8 14">
    <location>
        <position position="205"/>
    </location>
    <ligand>
        <name>Ca(2+)</name>
        <dbReference type="ChEBI" id="CHEBI:29108"/>
        <label>1</label>
    </ligand>
</feature>
<feature type="binding site" evidence="8 14">
    <location>
        <position position="208"/>
    </location>
    <ligand>
        <name>Ca(2+)</name>
        <dbReference type="ChEBI" id="CHEBI:29108"/>
        <label>1</label>
    </ligand>
</feature>
<feature type="binding site" evidence="8 14">
    <location>
        <position position="210"/>
    </location>
    <ligand>
        <name>Ca(2+)</name>
        <dbReference type="ChEBI" id="CHEBI:29108"/>
        <label>1</label>
    </ligand>
</feature>
<feature type="binding site" evidence="8 14">
    <location>
        <position position="212"/>
    </location>
    <ligand>
        <name>Ca(2+)</name>
        <dbReference type="ChEBI" id="CHEBI:29108"/>
        <label>1</label>
    </ligand>
</feature>
<feature type="binding site" evidence="13 14">
    <location>
        <position position="236"/>
    </location>
    <ligand>
        <name>substrate</name>
    </ligand>
</feature>
<feature type="binding site" evidence="13 14">
    <location>
        <begin position="253"/>
        <end position="258"/>
    </location>
    <ligand>
        <name>substrate</name>
    </ligand>
</feature>
<feature type="binding site" evidence="8 14">
    <location>
        <position position="258"/>
    </location>
    <ligand>
        <name>Ca(2+)</name>
        <dbReference type="ChEBI" id="CHEBI:29108"/>
        <label>3</label>
    </ligand>
</feature>
<feature type="binding site" evidence="13 14">
    <location>
        <position position="264"/>
    </location>
    <ligand>
        <name>substrate</name>
    </ligand>
</feature>
<feature type="binding site" evidence="13 14">
    <location>
        <begin position="292"/>
        <end position="295"/>
    </location>
    <ligand>
        <name>substrate</name>
    </ligand>
</feature>
<feature type="binding site" evidence="8 14">
    <location>
        <position position="301"/>
    </location>
    <ligand>
        <name>Ca(2+)</name>
        <dbReference type="ChEBI" id="CHEBI:29108"/>
        <label>3</label>
    </ligand>
</feature>
<feature type="binding site" evidence="13 14">
    <location>
        <position position="306"/>
    </location>
    <ligand>
        <name>substrate</name>
    </ligand>
</feature>
<feature type="binding site" evidence="13 14">
    <location>
        <position position="308"/>
    </location>
    <ligand>
        <name>substrate</name>
    </ligand>
</feature>
<feature type="binding site" evidence="8 14">
    <location>
        <position position="331"/>
    </location>
    <ligand>
        <name>Ca(2+)</name>
        <dbReference type="ChEBI" id="CHEBI:29108"/>
        <label>3</label>
    </ligand>
</feature>
<feature type="binding site" evidence="13 14">
    <location>
        <position position="368"/>
    </location>
    <ligand>
        <name>substrate</name>
    </ligand>
</feature>
<feature type="site" description="Cleavage, second; by autolysis" evidence="1">
    <location>
        <begin position="75"/>
        <end position="76"/>
    </location>
</feature>
<feature type="site" description="Cleavage, first; by autolysis" evidence="1">
    <location>
        <begin position="107"/>
        <end position="108"/>
    </location>
</feature>
<feature type="modified residue" description="Phosphoserine" evidence="1">
    <location>
        <position position="772"/>
    </location>
</feature>
<feature type="modified residue" description="Phosphoserine" evidence="1">
    <location>
        <position position="774"/>
    </location>
</feature>
<feature type="glycosylation site" description="N-linked (GlcNAc...) asparagine" evidence="8 14">
    <location>
        <position position="387"/>
    </location>
</feature>
<feature type="glycosylation site" description="N-linked (GlcNAc...) asparagine" evidence="8 14">
    <location>
        <position position="440"/>
    </location>
</feature>
<feature type="disulfide bond" evidence="8">
    <location>
        <begin position="211"/>
        <end position="360"/>
    </location>
</feature>
<feature type="disulfide bond" evidence="8">
    <location>
        <begin position="303"/>
        <end position="333"/>
    </location>
</feature>
<feature type="disulfide bond" evidence="8">
    <location>
        <begin position="450"/>
        <end position="474"/>
    </location>
</feature>
<feature type="sequence conflict" description="In Ref. 1; CAA37988." evidence="12" ref="1">
    <original>V</original>
    <variation>M</variation>
    <location>
        <position position="746"/>
    </location>
</feature>
<feature type="helix" evidence="15">
    <location>
        <begin position="118"/>
        <end position="120"/>
    </location>
</feature>
<feature type="turn" evidence="15">
    <location>
        <begin position="122"/>
        <end position="124"/>
    </location>
</feature>
<feature type="helix" evidence="15">
    <location>
        <begin position="135"/>
        <end position="139"/>
    </location>
</feature>
<feature type="strand" evidence="15">
    <location>
        <begin position="148"/>
        <end position="154"/>
    </location>
</feature>
<feature type="turn" evidence="15">
    <location>
        <begin position="161"/>
        <end position="163"/>
    </location>
</feature>
<feature type="helix" evidence="15">
    <location>
        <begin position="164"/>
        <end position="166"/>
    </location>
</feature>
<feature type="helix" evidence="15">
    <location>
        <begin position="169"/>
        <end position="171"/>
    </location>
</feature>
<feature type="turn" evidence="15">
    <location>
        <begin position="175"/>
        <end position="178"/>
    </location>
</feature>
<feature type="helix" evidence="15">
    <location>
        <begin position="194"/>
        <end position="203"/>
    </location>
</feature>
<feature type="strand" evidence="15">
    <location>
        <begin position="206"/>
        <end position="211"/>
    </location>
</feature>
<feature type="turn" evidence="15">
    <location>
        <begin position="215"/>
        <end position="218"/>
    </location>
</feature>
<feature type="strand" evidence="15">
    <location>
        <begin position="219"/>
        <end position="225"/>
    </location>
</feature>
<feature type="strand" evidence="15">
    <location>
        <begin position="227"/>
        <end position="229"/>
    </location>
</feature>
<feature type="helix" evidence="15">
    <location>
        <begin position="233"/>
        <end position="240"/>
    </location>
</feature>
<feature type="turn" evidence="15">
    <location>
        <begin position="244"/>
        <end position="246"/>
    </location>
</feature>
<feature type="strand" evidence="15">
    <location>
        <begin position="249"/>
        <end position="252"/>
    </location>
</feature>
<feature type="strand" evidence="15">
    <location>
        <begin position="259"/>
        <end position="261"/>
    </location>
</feature>
<feature type="helix" evidence="15">
    <location>
        <begin position="268"/>
        <end position="280"/>
    </location>
</feature>
<feature type="helix" evidence="15">
    <location>
        <begin position="282"/>
        <end position="284"/>
    </location>
</feature>
<feature type="strand" evidence="15">
    <location>
        <begin position="288"/>
        <end position="292"/>
    </location>
</feature>
<feature type="helix" evidence="15">
    <location>
        <begin position="297"/>
        <end position="299"/>
    </location>
</feature>
<feature type="helix" evidence="15">
    <location>
        <begin position="303"/>
        <end position="305"/>
    </location>
</feature>
<feature type="turn" evidence="15">
    <location>
        <begin position="307"/>
        <end position="310"/>
    </location>
</feature>
<feature type="strand" evidence="15">
    <location>
        <begin position="314"/>
        <end position="320"/>
    </location>
</feature>
<feature type="strand" evidence="15">
    <location>
        <begin position="338"/>
        <end position="341"/>
    </location>
</feature>
<feature type="strand" evidence="15">
    <location>
        <begin position="351"/>
        <end position="355"/>
    </location>
</feature>
<feature type="turn" evidence="15">
    <location>
        <begin position="356"/>
        <end position="358"/>
    </location>
</feature>
<feature type="strand" evidence="15">
    <location>
        <begin position="359"/>
        <end position="364"/>
    </location>
</feature>
<feature type="helix" evidence="15">
    <location>
        <begin position="367"/>
        <end position="384"/>
    </location>
</feature>
<feature type="helix" evidence="15">
    <location>
        <begin position="390"/>
        <end position="400"/>
    </location>
</feature>
<feature type="strand" evidence="15">
    <location>
        <begin position="419"/>
        <end position="421"/>
    </location>
</feature>
<feature type="turn" evidence="15">
    <location>
        <begin position="422"/>
        <end position="424"/>
    </location>
</feature>
<feature type="helix" evidence="15">
    <location>
        <begin position="431"/>
        <end position="438"/>
    </location>
</feature>
<feature type="strand" evidence="15">
    <location>
        <begin position="448"/>
        <end position="455"/>
    </location>
</feature>
<feature type="strand" evidence="15">
    <location>
        <begin position="464"/>
        <end position="471"/>
    </location>
</feature>
<feature type="strand" evidence="15">
    <location>
        <begin position="482"/>
        <end position="496"/>
    </location>
</feature>
<feature type="helix" evidence="15">
    <location>
        <begin position="498"/>
        <end position="500"/>
    </location>
</feature>
<feature type="strand" evidence="15">
    <location>
        <begin position="501"/>
        <end position="506"/>
    </location>
</feature>
<feature type="strand" evidence="15">
    <location>
        <begin position="512"/>
        <end position="516"/>
    </location>
</feature>
<feature type="strand" evidence="15">
    <location>
        <begin position="528"/>
        <end position="535"/>
    </location>
</feature>
<feature type="turn" evidence="15">
    <location>
        <begin position="537"/>
        <end position="540"/>
    </location>
</feature>
<feature type="strand" evidence="15">
    <location>
        <begin position="545"/>
        <end position="553"/>
    </location>
</feature>
<feature type="strand" evidence="15">
    <location>
        <begin position="555"/>
        <end position="557"/>
    </location>
</feature>
<feature type="strand" evidence="15">
    <location>
        <begin position="561"/>
        <end position="573"/>
    </location>
</feature>
<reference key="1">
    <citation type="journal article" date="1990" name="J. Biol. Chem.">
        <title>Structure and expression of mouse furin, a yeast Kex2-related protease. Lack of processing of coexpressed prorenin in GH4C1 cells.</title>
        <authorList>
            <person name="Hatsuzawa K."/>
            <person name="Hosaka M."/>
            <person name="Nakagawa T."/>
            <person name="Nagase M."/>
            <person name="Shoda A."/>
            <person name="Murakami K."/>
            <person name="Nakayama K."/>
        </authorList>
    </citation>
    <scope>NUCLEOTIDE SEQUENCE [MRNA]</scope>
    <scope>TISSUE SPECIFICITY</scope>
</reference>
<reference key="2">
    <citation type="journal article" date="1992" name="Life Sci. Adv. (Mol. Biol.)">
        <title>Cloning and functional expression of a 4.3 kbp mouse fur cDNA: evidence for differential expression.</title>
        <authorList>
            <person name="Creemers J.W.M."/>
            <person name="Roebroek A.J.M."/>
            <person name="van den Ouweland A.M.W."/>
            <person name="van Duijnhoven H.L.P."/>
            <person name="van de Ven W.J.M."/>
        </authorList>
    </citation>
    <scope>NUCLEOTIDE SEQUENCE [MRNA]</scope>
    <source>
        <tissue>Liver</tissue>
    </source>
</reference>
<reference key="3">
    <citation type="submission" date="2005-09" db="EMBL/GenBank/DDBJ databases">
        <authorList>
            <person name="Mural R.J."/>
            <person name="Adams M.D."/>
            <person name="Myers E.W."/>
            <person name="Smith H.O."/>
            <person name="Venter J.C."/>
        </authorList>
    </citation>
    <scope>NUCLEOTIDE SEQUENCE [LARGE SCALE GENOMIC DNA]</scope>
</reference>
<reference key="4">
    <citation type="journal article" date="2004" name="Genome Res.">
        <title>The status, quality, and expansion of the NIH full-length cDNA project: the Mammalian Gene Collection (MGC).</title>
        <authorList>
            <consortium name="The MGC Project Team"/>
        </authorList>
    </citation>
    <scope>NUCLEOTIDE SEQUENCE [LARGE SCALE MRNA]</scope>
    <source>
        <tissue>Eye</tissue>
    </source>
</reference>
<reference key="5">
    <citation type="journal article" date="1997" name="J. Cell Biol.">
        <title>Cytoskeletal protein ABP-280 directs the intracellular trafficking of furin and modulates proprotein processing in the endocytic pathway.</title>
        <authorList>
            <person name="Liu G."/>
            <person name="Thomas L."/>
            <person name="Warren R.A."/>
            <person name="Enns C.A."/>
            <person name="Cunningham C.C."/>
            <person name="Hartwig J.H."/>
            <person name="Thomas G."/>
        </authorList>
    </citation>
    <scope>INTERACTION WITH FLNA</scope>
</reference>
<reference key="6">
    <citation type="journal article" date="2008" name="Proc. Natl. Acad. Sci. U.S.A.">
        <title>Role of furin in granular acidification in the endocrine pancreas: identification of the V-ATPase subunit Ac45 as a candidate substrate.</title>
        <authorList>
            <person name="Louagie E."/>
            <person name="Taylor N.A."/>
            <person name="Flamez D."/>
            <person name="Roebroek A.J."/>
            <person name="Bright N.A."/>
            <person name="Meulemans S."/>
            <person name="Quintens R."/>
            <person name="Herrera P.L."/>
            <person name="Schuit F."/>
            <person name="Van de Ven W.J."/>
            <person name="Creemers J.W."/>
        </authorList>
    </citation>
    <scope>FUNCTION</scope>
    <scope>CATALYTIC ACTIVITY</scope>
    <scope>TISSUE SPECIFICITY</scope>
    <scope>DISRUPTION PHENOTYPE</scope>
</reference>
<reference key="7">
    <citation type="journal article" date="2010" name="Cell">
        <title>A tissue-specific atlas of mouse protein phosphorylation and expression.</title>
        <authorList>
            <person name="Huttlin E.L."/>
            <person name="Jedrychowski M.P."/>
            <person name="Elias J.E."/>
            <person name="Goswami T."/>
            <person name="Rad R."/>
            <person name="Beausoleil S.A."/>
            <person name="Villen J."/>
            <person name="Haas W."/>
            <person name="Sowa M.E."/>
            <person name="Gygi S.P."/>
        </authorList>
    </citation>
    <scope>IDENTIFICATION BY MASS SPECTROMETRY [LARGE SCALE ANALYSIS]</scope>
    <source>
        <tissue>Liver</tissue>
    </source>
</reference>
<reference key="8">
    <citation type="journal article" date="2003" name="Nat. Struct. Biol.">
        <title>The crystal structure of the proprotein processing proteinase furin explains its stringent specificity.</title>
        <authorList>
            <person name="Henrich S."/>
            <person name="Cameron A."/>
            <person name="Bourenkov G.P."/>
            <person name="Kiefersauer R."/>
            <person name="Huber R."/>
            <person name="Lindberg I."/>
            <person name="Bode W."/>
            <person name="Than M.E."/>
        </authorList>
    </citation>
    <scope>X-RAY CRYSTALLOGRAPHY (2.60 ANGSTROMS) OF 108-578 IN COMPLEX WITH CALCIUM AND INHIBITOR</scope>
    <scope>GLYCOSYLATION AT ASN-387 AND ASN-440</scope>
    <scope>DISULFIDE BONDS</scope>
</reference>
<proteinExistence type="evidence at protein level"/>
<comment type="function">
    <text evidence="1 9">Ubiquitous endoprotease within constitutive secretory pathways capable of cleavage at the RX(K/R)R consensus motif (PubMed:18713856). Mediates processing of TGFB1, an essential step in TGF-beta-1 activation (By similarity). Converts through proteolytic cleavage the non-functional Brain natriuretic factor prohormone into its active hormone BNP(1-45) (By similarity). By mediating processing of accessory subunit ATP6AP1/Ac45 of the V-ATPase, regulates the acidification of dense-core secretory granules in islets of Langerhans cells (PubMed:18713856).</text>
</comment>
<comment type="catalytic activity">
    <reaction evidence="9">
        <text>Release of mature proteins from their proproteins by cleavage of -Arg-Xaa-Yaa-Arg-|-Zaa- bonds, where Xaa can be any amino acid and Yaa is Arg or Lys. Releases albumin, complement component C3 and von Willebrand factor from their respective precursors.</text>
        <dbReference type="EC" id="3.4.21.75"/>
    </reaction>
</comment>
<comment type="cofactor">
    <cofactor evidence="8">
        <name>Ca(2+)</name>
        <dbReference type="ChEBI" id="CHEBI:29108"/>
    </cofactor>
    <text evidence="1">Binds 3 calcium ions per subunit.</text>
</comment>
<comment type="activity regulation">
    <text evidence="1">Inhibited by the not secondly cleaved propeptide. Inhibited by m-guanidinomethyl-phenylacetyl-Arg-Val-Arg-(amidomethyl)-benzamidine (m-guanidinomethyl-Phac-RVR-Amb) and 4-guanidinomethyl-phenylacetyl-Arg-Tle-Arg-4-amidinobenzylamide (MI-1148). Inhibited by Decanoyl-Arg-Val-Lys-Arg-chloromethylketone (decanoyl-RVKR-CMK). Inhibited by heparin/heparan sulfate-binding.</text>
</comment>
<comment type="subunit">
    <text evidence="1 11">Interacts with FLNA (PubMed:9412467). Binds to PACS1 which mediates TGN localization and connection to clathrin adapters (By similarity).</text>
</comment>
<comment type="subcellular location">
    <subcellularLocation>
        <location evidence="1">Golgi apparatus</location>
        <location evidence="1">trans-Golgi network membrane</location>
        <topology evidence="12">Single-pass type I membrane protein</topology>
    </subcellularLocation>
    <subcellularLocation>
        <location evidence="1">Cell membrane</location>
        <topology evidence="12">Single-pass type I membrane protein</topology>
    </subcellularLocation>
    <subcellularLocation>
        <location evidence="2">Secreted</location>
    </subcellularLocation>
    <subcellularLocation>
        <location evidence="1">Endosome membrane</location>
        <topology evidence="12">Single-pass type I membrane protein</topology>
    </subcellularLocation>
    <text evidence="1">Shuttles between the trans-Golgi network and the cell surface. Propeptide cleavage is a prerequisite for exit of furin molecules out of the endoplasmic reticulum (ER). A second cleavage within the propeptide occurs in the trans Golgi network (TGN), followed by the release of the propeptide and the activation of furin.</text>
</comment>
<comment type="tissue specificity">
    <text evidence="9 10">Seems to be expressed ubiquitously (PubMed:2266110). Expressed in islets of Langerhans (PubMed:18713856).</text>
</comment>
<comment type="domain">
    <text evidence="1">Contains a cytoplasmic domain responsible for its TGN localization and recycling from the cell surface.</text>
</comment>
<comment type="PTM">
    <text evidence="1">The inhibition peptide, which plays the role of an intramolecular chaperone, is autocatalytically removed in the endoplasmic reticulum (ER) and remains non-covalently bound to furin as a potent autoinhibitor. Following transport to the trans Golgi, a second cleavage within the inhibition propeptide results in propeptide dissociation and furin activation.</text>
</comment>
<comment type="PTM">
    <text evidence="1">Phosphorylation is required for TGN localization of the endoprotease. In vivo, exists as di-, mono- and non-phosphorylated forms.</text>
</comment>
<comment type="disruption phenotype">
    <text evidence="9">Conditional knockout in pancreas causes mild glucose intolerance (PubMed:18713856). Insulin secretion by islets of Langerhans cells is reduced (PubMed:18713856). In islets of Langerhans cells, processing of pro-proteins including Pcsk2, Ins2/proinsulin II and Gcg/proglucagon and acidification of dense-core secretory granules are reduced (PubMed:18713856). Islets of Langerhans are normal (PubMed:18713856).</text>
</comment>
<comment type="similarity">
    <text evidence="12">Belongs to the peptidase S8 family. Furin subfamily.</text>
</comment>
<sequence length="793" mass="86772">MELRSWLLWVVAAAGAVVLLAADAQGQKIFTNTWAVHIPGGPAVADRVAQKHGFHNLGQIFGDYYHFWHRAVTKRSLSPHRPRHSRLQREPQVKWLEQQVAKRRAKRDVYQEPTDPKFPQQWYLSGVTQRDLNVKEAWAQGFTGHGIVVSILDDGIEKNHPDLAGNYDPGASFDVNDQDPDPQPRYTQMNDNRHGTRCAGEVAAVANNGVCGVGVAYNARIGGVRMLDGEVTDAVEARSLGLNPNHIHIYSASWGPEDDGKTVDGPARLAEEAFFRGVSQGRGGLGSIFVWASGNGGREHDSCNCDGYTNSIYTLSISSATQFGNVPWYSEACSSTLATTYSSGNQNEKQIVTTDLRQKCTESHTGTSASAPLAAGIIALTLEANKNLTWRDMQHLVVQTSKPAHLNADDWATNGVGRKVSHSYGYGLLDAGAMVALAQNWTTVAPQRKCIVEILVEPKDIGKRLEVRKAVTACLGEPNHITRLEHVQARLTLSYNRRGDLAIHLISPMGTRSTLLAARPHDYSADGFNDWAFMTTHSWDEDPAGEWVLEIENTSEANNYGTLTKFTLVLYGTAPEGLSTPPESSGCKTLTSSQACVVCEEGYSLHQKSCVQHCPPGFIPQVLDTHYSTENDVEIIRASVCTPCHASCATCQGPAPTDCLSCPSHASLDPVEQTCSRQSQSSRESRPQQQPPALRPEVEMEPRLQAGLASHLPEVLAGLSCLIIVLIFGIVFLFLHRCSGFSFRGVKVYTMDRGLISYKGLPPEAWQEECPSDSEEDEGRGERTAFIKDQSAL</sequence>
<gene>
    <name type="primary">Furin</name>
    <name type="synonym">Fur</name>
    <name type="synonym">Pcsk3</name>
</gene>
<protein>
    <recommendedName>
        <fullName>Furin</fullName>
        <ecNumber evidence="9">3.4.21.75</ecNumber>
    </recommendedName>
    <alternativeName>
        <fullName>Dibasic-processing enzyme</fullName>
    </alternativeName>
    <alternativeName>
        <fullName>Paired basic amino acid residue-cleaving enzyme</fullName>
        <shortName>PACE</shortName>
    </alternativeName>
    <alternativeName>
        <fullName>Prohormone convertase 3</fullName>
    </alternativeName>
</protein>
<accession>P23188</accession>
<accession>Q6GTN6</accession>
<evidence type="ECO:0000250" key="1">
    <source>
        <dbReference type="UniProtKB" id="P09958"/>
    </source>
</evidence>
<evidence type="ECO:0000250" key="2">
    <source>
        <dbReference type="UniProtKB" id="Q28193"/>
    </source>
</evidence>
<evidence type="ECO:0000255" key="3"/>
<evidence type="ECO:0000255" key="4">
    <source>
        <dbReference type="PROSITE-ProRule" id="PRU00293"/>
    </source>
</evidence>
<evidence type="ECO:0000255" key="5">
    <source>
        <dbReference type="PROSITE-ProRule" id="PRU01173"/>
    </source>
</evidence>
<evidence type="ECO:0000255" key="6">
    <source>
        <dbReference type="PROSITE-ProRule" id="PRU01240"/>
    </source>
</evidence>
<evidence type="ECO:0000256" key="7">
    <source>
        <dbReference type="SAM" id="MobiDB-lite"/>
    </source>
</evidence>
<evidence type="ECO:0000269" key="8">
    <source>
    </source>
</evidence>
<evidence type="ECO:0000269" key="9">
    <source>
    </source>
</evidence>
<evidence type="ECO:0000269" key="10">
    <source>
    </source>
</evidence>
<evidence type="ECO:0000269" key="11">
    <source>
    </source>
</evidence>
<evidence type="ECO:0000305" key="12"/>
<evidence type="ECO:0000305" key="13">
    <source>
    </source>
</evidence>
<evidence type="ECO:0007744" key="14">
    <source>
        <dbReference type="PDB" id="1P8J"/>
    </source>
</evidence>
<evidence type="ECO:0007829" key="15">
    <source>
        <dbReference type="PDB" id="1P8J"/>
    </source>
</evidence>
<name>FURIN_MOUSE</name>
<organism>
    <name type="scientific">Mus musculus</name>
    <name type="common">Mouse</name>
    <dbReference type="NCBI Taxonomy" id="10090"/>
    <lineage>
        <taxon>Eukaryota</taxon>
        <taxon>Metazoa</taxon>
        <taxon>Chordata</taxon>
        <taxon>Craniata</taxon>
        <taxon>Vertebrata</taxon>
        <taxon>Euteleostomi</taxon>
        <taxon>Mammalia</taxon>
        <taxon>Eutheria</taxon>
        <taxon>Euarchontoglires</taxon>
        <taxon>Glires</taxon>
        <taxon>Rodentia</taxon>
        <taxon>Myomorpha</taxon>
        <taxon>Muroidea</taxon>
        <taxon>Muridae</taxon>
        <taxon>Murinae</taxon>
        <taxon>Mus</taxon>
        <taxon>Mus</taxon>
    </lineage>
</organism>
<keyword id="KW-0002">3D-structure</keyword>
<keyword id="KW-0068">Autocatalytic cleavage</keyword>
<keyword id="KW-0106">Calcium</keyword>
<keyword id="KW-1003">Cell membrane</keyword>
<keyword id="KW-0165">Cleavage on pair of basic residues</keyword>
<keyword id="KW-1015">Disulfide bond</keyword>
<keyword id="KW-0967">Endosome</keyword>
<keyword id="KW-0325">Glycoprotein</keyword>
<keyword id="KW-0333">Golgi apparatus</keyword>
<keyword id="KW-0358">Heparin-binding</keyword>
<keyword id="KW-0378">Hydrolase</keyword>
<keyword id="KW-0472">Membrane</keyword>
<keyword id="KW-0479">Metal-binding</keyword>
<keyword id="KW-0597">Phosphoprotein</keyword>
<keyword id="KW-0645">Protease</keyword>
<keyword id="KW-1185">Reference proteome</keyword>
<keyword id="KW-0677">Repeat</keyword>
<keyword id="KW-0964">Secreted</keyword>
<keyword id="KW-0720">Serine protease</keyword>
<keyword id="KW-0732">Signal</keyword>
<keyword id="KW-0812">Transmembrane</keyword>
<keyword id="KW-1133">Transmembrane helix</keyword>
<keyword id="KW-0865">Zymogen</keyword>